<feature type="chain" id="PRO_1000191781" description="Transcriptional repressor NrdR">
    <location>
        <begin position="1"/>
        <end position="200"/>
    </location>
</feature>
<feature type="domain" description="ATP-cone" evidence="1">
    <location>
        <begin position="46"/>
        <end position="136"/>
    </location>
</feature>
<feature type="zinc finger region" evidence="1">
    <location>
        <begin position="3"/>
        <end position="34"/>
    </location>
</feature>
<dbReference type="EMBL" id="CP001213">
    <property type="protein sequence ID" value="ACL29080.1"/>
    <property type="molecule type" value="Genomic_DNA"/>
</dbReference>
<dbReference type="SMR" id="B8DSV1"/>
<dbReference type="STRING" id="442563.BLA_0788"/>
<dbReference type="KEGG" id="bla:BLA_0788"/>
<dbReference type="HOGENOM" id="CLU_108412_1_0_11"/>
<dbReference type="Proteomes" id="UP000002456">
    <property type="component" value="Chromosome"/>
</dbReference>
<dbReference type="GO" id="GO:0005524">
    <property type="term" value="F:ATP binding"/>
    <property type="evidence" value="ECO:0007669"/>
    <property type="project" value="UniProtKB-KW"/>
</dbReference>
<dbReference type="GO" id="GO:0003677">
    <property type="term" value="F:DNA binding"/>
    <property type="evidence" value="ECO:0007669"/>
    <property type="project" value="UniProtKB-KW"/>
</dbReference>
<dbReference type="GO" id="GO:0008270">
    <property type="term" value="F:zinc ion binding"/>
    <property type="evidence" value="ECO:0007669"/>
    <property type="project" value="UniProtKB-UniRule"/>
</dbReference>
<dbReference type="GO" id="GO:0045892">
    <property type="term" value="P:negative regulation of DNA-templated transcription"/>
    <property type="evidence" value="ECO:0007669"/>
    <property type="project" value="UniProtKB-UniRule"/>
</dbReference>
<dbReference type="HAMAP" id="MF_00440">
    <property type="entry name" value="NrdR"/>
    <property type="match status" value="1"/>
</dbReference>
<dbReference type="InterPro" id="IPR005144">
    <property type="entry name" value="ATP-cone_dom"/>
</dbReference>
<dbReference type="InterPro" id="IPR055173">
    <property type="entry name" value="NrdR-like_N"/>
</dbReference>
<dbReference type="InterPro" id="IPR003796">
    <property type="entry name" value="RNR_NrdR-like"/>
</dbReference>
<dbReference type="NCBIfam" id="TIGR00244">
    <property type="entry name" value="transcriptional regulator NrdR"/>
    <property type="match status" value="1"/>
</dbReference>
<dbReference type="PANTHER" id="PTHR30455">
    <property type="entry name" value="TRANSCRIPTIONAL REPRESSOR NRDR"/>
    <property type="match status" value="1"/>
</dbReference>
<dbReference type="PANTHER" id="PTHR30455:SF2">
    <property type="entry name" value="TRANSCRIPTIONAL REPRESSOR NRDR"/>
    <property type="match status" value="1"/>
</dbReference>
<dbReference type="Pfam" id="PF03477">
    <property type="entry name" value="ATP-cone"/>
    <property type="match status" value="1"/>
</dbReference>
<dbReference type="Pfam" id="PF22811">
    <property type="entry name" value="Zn_ribbon_NrdR"/>
    <property type="match status" value="1"/>
</dbReference>
<dbReference type="PROSITE" id="PS51161">
    <property type="entry name" value="ATP_CONE"/>
    <property type="match status" value="1"/>
</dbReference>
<gene>
    <name evidence="1" type="primary">nrdR</name>
    <name type="ordered locus">BLA_0788</name>
</gene>
<protein>
    <recommendedName>
        <fullName evidence="1">Transcriptional repressor NrdR</fullName>
    </recommendedName>
</protein>
<evidence type="ECO:0000255" key="1">
    <source>
        <dbReference type="HAMAP-Rule" id="MF_00440"/>
    </source>
</evidence>
<name>NRDR_BIFA0</name>
<keyword id="KW-0067">ATP-binding</keyword>
<keyword id="KW-0238">DNA-binding</keyword>
<keyword id="KW-0479">Metal-binding</keyword>
<keyword id="KW-0547">Nucleotide-binding</keyword>
<keyword id="KW-1185">Reference proteome</keyword>
<keyword id="KW-0678">Repressor</keyword>
<keyword id="KW-0804">Transcription</keyword>
<keyword id="KW-0805">Transcription regulation</keyword>
<keyword id="KW-0862">Zinc</keyword>
<keyword id="KW-0863">Zinc-finger</keyword>
<sequence length="200" mass="22227">MHCPFCQNPDTKVIDTRISDDGHSIRRRRECPNCGARFSTLETTMLLVKKRSGNVEQFDRNKVIAGVRKACQGRPIHEDDLKRLGQQVEEDLRARGVAQVPSDEVGKAILRPLKDLDEVAYLRFASVYQNFEDLEDFQHAIDALRDSDKMLVSACPAGQAETSISCGYQLSMTRVRIVPVMASSASMVTSSGHLVTSVTT</sequence>
<proteinExistence type="inferred from homology"/>
<reference key="1">
    <citation type="journal article" date="2009" name="J. Bacteriol.">
        <title>Genome sequence of the probiotic bacterium Bifidobacterium animalis subsp. lactis AD011.</title>
        <authorList>
            <person name="Kim J.F."/>
            <person name="Jeong H."/>
            <person name="Yu D.S."/>
            <person name="Choi S.-H."/>
            <person name="Hur C.-G."/>
            <person name="Park M.-S."/>
            <person name="Yoon S.H."/>
            <person name="Kim D.-W."/>
            <person name="Ji G.E."/>
            <person name="Park H.-S."/>
            <person name="Oh T.K."/>
        </authorList>
    </citation>
    <scope>NUCLEOTIDE SEQUENCE [LARGE SCALE GENOMIC DNA]</scope>
    <source>
        <strain>AD011</strain>
    </source>
</reference>
<comment type="function">
    <text evidence="1">Negatively regulates transcription of bacterial ribonucleotide reductase nrd genes and operons by binding to NrdR-boxes.</text>
</comment>
<comment type="cofactor">
    <cofactor evidence="1">
        <name>Zn(2+)</name>
        <dbReference type="ChEBI" id="CHEBI:29105"/>
    </cofactor>
    <text evidence="1">Binds 1 zinc ion.</text>
</comment>
<comment type="similarity">
    <text evidence="1">Belongs to the NrdR family.</text>
</comment>
<organism>
    <name type="scientific">Bifidobacterium animalis subsp. lactis (strain AD011)</name>
    <dbReference type="NCBI Taxonomy" id="442563"/>
    <lineage>
        <taxon>Bacteria</taxon>
        <taxon>Bacillati</taxon>
        <taxon>Actinomycetota</taxon>
        <taxon>Actinomycetes</taxon>
        <taxon>Bifidobacteriales</taxon>
        <taxon>Bifidobacteriaceae</taxon>
        <taxon>Bifidobacterium</taxon>
    </lineage>
</organism>
<accession>B8DSV1</accession>